<comment type="function">
    <text evidence="1">Peptide chain release factor 2 directs the termination of translation in response to the peptide chain termination codons UGA and UAA.</text>
</comment>
<comment type="subcellular location">
    <subcellularLocation>
        <location evidence="1">Cytoplasm</location>
    </subcellularLocation>
</comment>
<comment type="PTM">
    <text evidence="1">Methylated by PrmC. Methylation increases the termination efficiency of RF2.</text>
</comment>
<comment type="similarity">
    <text evidence="1">Belongs to the prokaryotic/mitochondrial release factor family.</text>
</comment>
<sequence length="368" mass="42274">MHESLDKRLEGLLTGLALAGRSLDLEGKRQELSILEEQTLKEDFWQDVTSAGKVSERIVSLKRQIAHYEEFKVRVENLAFFLNDGDVSADPELREDLEKEFTICEHILSEWETQRLLSGEVDKNPCFLTINAGAGGTESCDWVEMLFRMYCRWAAQHQWKVEVIDRQEGDVAGIKHVTVKFSGDYAYGYAKAERGVHRLVRISPFDSNAKRHTSFASVDVYPEIDDEIEIDIRPNDLRIDTFRSSGAGGQHVNVTDSAVRITHIPTGIMVSCQRERSQIQNRESCMKMLRARMYQQILQERLEKQLLDRKNKKEIAWGSQIRNYVFQPYTLVKDVRTGHETGNVQAMMDGELLDDFVKAYLAEYGEIS</sequence>
<evidence type="ECO:0000255" key="1">
    <source>
        <dbReference type="HAMAP-Rule" id="MF_00094"/>
    </source>
</evidence>
<proteinExistence type="inferred from homology"/>
<reference key="1">
    <citation type="journal article" date="2005" name="Genome Res.">
        <title>The Chlamydophila abortus genome sequence reveals an array of variable proteins that contribute to interspecies variation.</title>
        <authorList>
            <person name="Thomson N.R."/>
            <person name="Yeats C."/>
            <person name="Bell K."/>
            <person name="Holden M.T.G."/>
            <person name="Bentley S.D."/>
            <person name="Livingstone M."/>
            <person name="Cerdeno-Tarraga A.-M."/>
            <person name="Harris B."/>
            <person name="Doggett J."/>
            <person name="Ormond D."/>
            <person name="Mungall K."/>
            <person name="Clarke K."/>
            <person name="Feltwell T."/>
            <person name="Hance Z."/>
            <person name="Sanders M."/>
            <person name="Quail M.A."/>
            <person name="Price C."/>
            <person name="Barrell B.G."/>
            <person name="Parkhill J."/>
            <person name="Longbottom D."/>
        </authorList>
    </citation>
    <scope>NUCLEOTIDE SEQUENCE [LARGE SCALE GENOMIC DNA]</scope>
    <source>
        <strain>DSM 27085 / S26/3</strain>
    </source>
</reference>
<name>RF2_CHLAB</name>
<accession>Q5L6U9</accession>
<protein>
    <recommendedName>
        <fullName evidence="1">Peptide chain release factor 2</fullName>
        <shortName evidence="1">RF-2</shortName>
    </recommendedName>
</protein>
<gene>
    <name evidence="1" type="primary">prfB</name>
    <name type="ordered locus">CAB163</name>
</gene>
<dbReference type="EMBL" id="CR848038">
    <property type="protein sequence ID" value="CAH63621.1"/>
    <property type="molecule type" value="Genomic_DNA"/>
</dbReference>
<dbReference type="SMR" id="Q5L6U9"/>
<dbReference type="KEGG" id="cab:CAB163"/>
<dbReference type="eggNOG" id="COG1186">
    <property type="taxonomic scope" value="Bacteria"/>
</dbReference>
<dbReference type="HOGENOM" id="CLU_221953_0_0_0"/>
<dbReference type="Proteomes" id="UP000001012">
    <property type="component" value="Chromosome"/>
</dbReference>
<dbReference type="GO" id="GO:0005737">
    <property type="term" value="C:cytoplasm"/>
    <property type="evidence" value="ECO:0007669"/>
    <property type="project" value="UniProtKB-SubCell"/>
</dbReference>
<dbReference type="GO" id="GO:0016149">
    <property type="term" value="F:translation release factor activity, codon specific"/>
    <property type="evidence" value="ECO:0007669"/>
    <property type="project" value="UniProtKB-UniRule"/>
</dbReference>
<dbReference type="FunFam" id="3.30.160.20:FF:000004">
    <property type="entry name" value="Peptide chain release factor 1"/>
    <property type="match status" value="1"/>
</dbReference>
<dbReference type="Gene3D" id="3.30.160.20">
    <property type="match status" value="1"/>
</dbReference>
<dbReference type="Gene3D" id="3.30.70.1660">
    <property type="match status" value="1"/>
</dbReference>
<dbReference type="Gene3D" id="1.20.58.410">
    <property type="entry name" value="Release factor"/>
    <property type="match status" value="1"/>
</dbReference>
<dbReference type="HAMAP" id="MF_00094">
    <property type="entry name" value="Rel_fac_2"/>
    <property type="match status" value="1"/>
</dbReference>
<dbReference type="InterPro" id="IPR005139">
    <property type="entry name" value="PCRF"/>
</dbReference>
<dbReference type="InterPro" id="IPR000352">
    <property type="entry name" value="Pep_chain_release_fac_I"/>
</dbReference>
<dbReference type="InterPro" id="IPR045853">
    <property type="entry name" value="Pep_chain_release_fac_I_sf"/>
</dbReference>
<dbReference type="InterPro" id="IPR004374">
    <property type="entry name" value="PrfB"/>
</dbReference>
<dbReference type="NCBIfam" id="TIGR00020">
    <property type="entry name" value="prfB"/>
    <property type="match status" value="1"/>
</dbReference>
<dbReference type="PANTHER" id="PTHR43116:SF3">
    <property type="entry name" value="CLASS I PEPTIDE CHAIN RELEASE FACTOR"/>
    <property type="match status" value="1"/>
</dbReference>
<dbReference type="PANTHER" id="PTHR43116">
    <property type="entry name" value="PEPTIDE CHAIN RELEASE FACTOR 2"/>
    <property type="match status" value="1"/>
</dbReference>
<dbReference type="Pfam" id="PF03462">
    <property type="entry name" value="PCRF"/>
    <property type="match status" value="1"/>
</dbReference>
<dbReference type="Pfam" id="PF00472">
    <property type="entry name" value="RF-1"/>
    <property type="match status" value="1"/>
</dbReference>
<dbReference type="SMART" id="SM00937">
    <property type="entry name" value="PCRF"/>
    <property type="match status" value="1"/>
</dbReference>
<dbReference type="SUPFAM" id="SSF75620">
    <property type="entry name" value="Release factor"/>
    <property type="match status" value="1"/>
</dbReference>
<dbReference type="PROSITE" id="PS00745">
    <property type="entry name" value="RF_PROK_I"/>
    <property type="match status" value="1"/>
</dbReference>
<feature type="chain" id="PRO_1000004982" description="Peptide chain release factor 2">
    <location>
        <begin position="1"/>
        <end position="368"/>
    </location>
</feature>
<feature type="modified residue" description="N5-methylglutamine" evidence="1">
    <location>
        <position position="250"/>
    </location>
</feature>
<organism>
    <name type="scientific">Chlamydia abortus (strain DSM 27085 / S26/3)</name>
    <name type="common">Chlamydophila abortus</name>
    <dbReference type="NCBI Taxonomy" id="218497"/>
    <lineage>
        <taxon>Bacteria</taxon>
        <taxon>Pseudomonadati</taxon>
        <taxon>Chlamydiota</taxon>
        <taxon>Chlamydiia</taxon>
        <taxon>Chlamydiales</taxon>
        <taxon>Chlamydiaceae</taxon>
        <taxon>Chlamydia/Chlamydophila group</taxon>
        <taxon>Chlamydia</taxon>
    </lineage>
</organism>
<keyword id="KW-0963">Cytoplasm</keyword>
<keyword id="KW-0488">Methylation</keyword>
<keyword id="KW-0648">Protein biosynthesis</keyword>